<organism>
    <name type="scientific">Sorangium cellulosum (strain So ce56)</name>
    <name type="common">Polyangium cellulosum (strain So ce56)</name>
    <dbReference type="NCBI Taxonomy" id="448385"/>
    <lineage>
        <taxon>Bacteria</taxon>
        <taxon>Pseudomonadati</taxon>
        <taxon>Myxococcota</taxon>
        <taxon>Polyangia</taxon>
        <taxon>Polyangiales</taxon>
        <taxon>Polyangiaceae</taxon>
        <taxon>Sorangium</taxon>
    </lineage>
</organism>
<sequence>MSIATPASSDLLRRTFLEFFAQRGHEIVPSAPLVPQNDPTLMFVNAGMVQFKDVFTGKDRRPYQRAASSQKCIRISGKHNDLENVGVTARHQTFFEMLGNFSFGDYFKEDAIAFAWELLTKVYDISPSRLVVTIYNGEGGFPADDEAAAIWRKVTGFGDDRILRLGLADNFWTMGDVGPCGPCSEIHFFHGKEPDVARFGEEPRIDGTGWTEIWNNVFMQYERAEKDGPLVPLPAPSIDTGMGLERLASVLQGVTSNYDTDLLRGLVDKAAELSGKPYSGGSADDDVSMRVIADHARTAAFLIAEGVMPEKQRREYVLRRVMRRAIRHGHRLGIDRPFLHEVALEVVRRMGETYPELRDRRELIARVTEDEEVRFRSTLKRGMKILDERFDEMRSSGERTLPAAAAADLYTTYGFPLDLTQVISAESNFDVDVQGAEAIIKGAGEADGPIDPTAAVDPAHREARAKLAQPVVFTGYEHEEGDSEIVAIVRVEIQGEGDRARKVRALVERAEAGAAVEIVVRETPFYAESGGQVGDVGEVTADGARVEVKDTQKPLAGLVVHEGVVHEGALAVGQRVHLAVDHAARSATRRNHSATHVLHWALRKVLGEHAQQKGSRVGPDVLRFDFTHNRPLTREEISRIEDLVNEKVLTNAKVTTEILAMDEARRRGAMAIFEEKYGDTVRMLTMTPEVVELCGGTHACALGDIGLFKITSEGGVAAGVRRILASTGLNALAYARGVEAELARARQVAKAQGGDLAEKIGKIVAHERELEKKVAELERRILEGAGPAQGGGGGGIDAMLDGARDIGGIKVLARRVPDGTNPGALRDLAEKLRDKLGDRSAVLLGAAVGDKAQLAVMLSKSATERLKAGELIKPIARIVGGSGGGRPDMAQAGGTDVAQLDAAIAALYTEVERALAS</sequence>
<accession>A9FRF5</accession>
<feature type="chain" id="PRO_0000347805" description="Alanine--tRNA ligase">
    <location>
        <begin position="1"/>
        <end position="917"/>
    </location>
</feature>
<feature type="binding site" evidence="1">
    <location>
        <position position="592"/>
    </location>
    <ligand>
        <name>Zn(2+)</name>
        <dbReference type="ChEBI" id="CHEBI:29105"/>
    </ligand>
</feature>
<feature type="binding site" evidence="1">
    <location>
        <position position="596"/>
    </location>
    <ligand>
        <name>Zn(2+)</name>
        <dbReference type="ChEBI" id="CHEBI:29105"/>
    </ligand>
</feature>
<feature type="binding site" evidence="1">
    <location>
        <position position="694"/>
    </location>
    <ligand>
        <name>Zn(2+)</name>
        <dbReference type="ChEBI" id="CHEBI:29105"/>
    </ligand>
</feature>
<feature type="binding site" evidence="1">
    <location>
        <position position="698"/>
    </location>
    <ligand>
        <name>Zn(2+)</name>
        <dbReference type="ChEBI" id="CHEBI:29105"/>
    </ligand>
</feature>
<dbReference type="EC" id="6.1.1.7" evidence="1"/>
<dbReference type="EMBL" id="AM746676">
    <property type="protein sequence ID" value="CAN95287.1"/>
    <property type="molecule type" value="Genomic_DNA"/>
</dbReference>
<dbReference type="RefSeq" id="WP_012237755.1">
    <property type="nucleotide sequence ID" value="NC_010162.1"/>
</dbReference>
<dbReference type="SMR" id="A9FRF5"/>
<dbReference type="STRING" id="448385.sce5124"/>
<dbReference type="KEGG" id="scl:sce5124"/>
<dbReference type="eggNOG" id="COG0013">
    <property type="taxonomic scope" value="Bacteria"/>
</dbReference>
<dbReference type="HOGENOM" id="CLU_004485_1_1_7"/>
<dbReference type="OrthoDB" id="9803884at2"/>
<dbReference type="BioCyc" id="SCEL448385:SCE_RS26305-MONOMER"/>
<dbReference type="Proteomes" id="UP000002139">
    <property type="component" value="Chromosome"/>
</dbReference>
<dbReference type="GO" id="GO:0005829">
    <property type="term" value="C:cytosol"/>
    <property type="evidence" value="ECO:0007669"/>
    <property type="project" value="TreeGrafter"/>
</dbReference>
<dbReference type="GO" id="GO:0004813">
    <property type="term" value="F:alanine-tRNA ligase activity"/>
    <property type="evidence" value="ECO:0007669"/>
    <property type="project" value="UniProtKB-UniRule"/>
</dbReference>
<dbReference type="GO" id="GO:0002161">
    <property type="term" value="F:aminoacyl-tRNA deacylase activity"/>
    <property type="evidence" value="ECO:0007669"/>
    <property type="project" value="TreeGrafter"/>
</dbReference>
<dbReference type="GO" id="GO:0005524">
    <property type="term" value="F:ATP binding"/>
    <property type="evidence" value="ECO:0007669"/>
    <property type="project" value="UniProtKB-UniRule"/>
</dbReference>
<dbReference type="GO" id="GO:0000049">
    <property type="term" value="F:tRNA binding"/>
    <property type="evidence" value="ECO:0007669"/>
    <property type="project" value="UniProtKB-KW"/>
</dbReference>
<dbReference type="GO" id="GO:0008270">
    <property type="term" value="F:zinc ion binding"/>
    <property type="evidence" value="ECO:0007669"/>
    <property type="project" value="UniProtKB-UniRule"/>
</dbReference>
<dbReference type="GO" id="GO:0006419">
    <property type="term" value="P:alanyl-tRNA aminoacylation"/>
    <property type="evidence" value="ECO:0007669"/>
    <property type="project" value="UniProtKB-UniRule"/>
</dbReference>
<dbReference type="GO" id="GO:0045892">
    <property type="term" value="P:negative regulation of DNA-templated transcription"/>
    <property type="evidence" value="ECO:0007669"/>
    <property type="project" value="TreeGrafter"/>
</dbReference>
<dbReference type="CDD" id="cd00673">
    <property type="entry name" value="AlaRS_core"/>
    <property type="match status" value="1"/>
</dbReference>
<dbReference type="FunFam" id="3.10.310.40:FF:000001">
    <property type="entry name" value="Alanine--tRNA ligase"/>
    <property type="match status" value="1"/>
</dbReference>
<dbReference type="FunFam" id="3.30.930.10:FF:000004">
    <property type="entry name" value="Alanine--tRNA ligase"/>
    <property type="match status" value="1"/>
</dbReference>
<dbReference type="FunFam" id="3.30.980.10:FF:000004">
    <property type="entry name" value="Alanine--tRNA ligase, cytoplasmic"/>
    <property type="match status" value="1"/>
</dbReference>
<dbReference type="Gene3D" id="2.40.30.130">
    <property type="match status" value="1"/>
</dbReference>
<dbReference type="Gene3D" id="3.10.310.40">
    <property type="match status" value="1"/>
</dbReference>
<dbReference type="Gene3D" id="3.30.54.20">
    <property type="match status" value="1"/>
</dbReference>
<dbReference type="Gene3D" id="3.30.930.10">
    <property type="entry name" value="Bira Bifunctional Protein, Domain 2"/>
    <property type="match status" value="1"/>
</dbReference>
<dbReference type="Gene3D" id="3.30.980.10">
    <property type="entry name" value="Threonyl-trna Synthetase, Chain A, domain 2"/>
    <property type="match status" value="1"/>
</dbReference>
<dbReference type="HAMAP" id="MF_00036_B">
    <property type="entry name" value="Ala_tRNA_synth_B"/>
    <property type="match status" value="1"/>
</dbReference>
<dbReference type="InterPro" id="IPR045864">
    <property type="entry name" value="aa-tRNA-synth_II/BPL/LPL"/>
</dbReference>
<dbReference type="InterPro" id="IPR002318">
    <property type="entry name" value="Ala-tRNA-lgiase_IIc"/>
</dbReference>
<dbReference type="InterPro" id="IPR018162">
    <property type="entry name" value="Ala-tRNA-ligase_IIc_anticod-bd"/>
</dbReference>
<dbReference type="InterPro" id="IPR018165">
    <property type="entry name" value="Ala-tRNA-synth_IIc_core"/>
</dbReference>
<dbReference type="InterPro" id="IPR018164">
    <property type="entry name" value="Ala-tRNA-synth_IIc_N"/>
</dbReference>
<dbReference type="InterPro" id="IPR050058">
    <property type="entry name" value="Ala-tRNA_ligase"/>
</dbReference>
<dbReference type="InterPro" id="IPR023033">
    <property type="entry name" value="Ala_tRNA_ligase_euk/bac"/>
</dbReference>
<dbReference type="InterPro" id="IPR003156">
    <property type="entry name" value="DHHA1_dom"/>
</dbReference>
<dbReference type="InterPro" id="IPR018163">
    <property type="entry name" value="Thr/Ala-tRNA-synth_IIc_edit"/>
</dbReference>
<dbReference type="InterPro" id="IPR009000">
    <property type="entry name" value="Transl_B-barrel_sf"/>
</dbReference>
<dbReference type="InterPro" id="IPR012947">
    <property type="entry name" value="tRNA_SAD"/>
</dbReference>
<dbReference type="NCBIfam" id="TIGR00344">
    <property type="entry name" value="alaS"/>
    <property type="match status" value="1"/>
</dbReference>
<dbReference type="PANTHER" id="PTHR11777:SF9">
    <property type="entry name" value="ALANINE--TRNA LIGASE, CYTOPLASMIC"/>
    <property type="match status" value="1"/>
</dbReference>
<dbReference type="PANTHER" id="PTHR11777">
    <property type="entry name" value="ALANYL-TRNA SYNTHETASE"/>
    <property type="match status" value="1"/>
</dbReference>
<dbReference type="Pfam" id="PF02272">
    <property type="entry name" value="DHHA1"/>
    <property type="match status" value="1"/>
</dbReference>
<dbReference type="Pfam" id="PF01411">
    <property type="entry name" value="tRNA-synt_2c"/>
    <property type="match status" value="1"/>
</dbReference>
<dbReference type="Pfam" id="PF07973">
    <property type="entry name" value="tRNA_SAD"/>
    <property type="match status" value="1"/>
</dbReference>
<dbReference type="PRINTS" id="PR00980">
    <property type="entry name" value="TRNASYNTHALA"/>
</dbReference>
<dbReference type="SMART" id="SM00863">
    <property type="entry name" value="tRNA_SAD"/>
    <property type="match status" value="1"/>
</dbReference>
<dbReference type="SUPFAM" id="SSF55681">
    <property type="entry name" value="Class II aaRS and biotin synthetases"/>
    <property type="match status" value="1"/>
</dbReference>
<dbReference type="SUPFAM" id="SSF101353">
    <property type="entry name" value="Putative anticodon-binding domain of alanyl-tRNA synthetase (AlaRS)"/>
    <property type="match status" value="1"/>
</dbReference>
<dbReference type="SUPFAM" id="SSF55186">
    <property type="entry name" value="ThrRS/AlaRS common domain"/>
    <property type="match status" value="1"/>
</dbReference>
<dbReference type="SUPFAM" id="SSF50447">
    <property type="entry name" value="Translation proteins"/>
    <property type="match status" value="1"/>
</dbReference>
<dbReference type="PROSITE" id="PS50860">
    <property type="entry name" value="AA_TRNA_LIGASE_II_ALA"/>
    <property type="match status" value="1"/>
</dbReference>
<name>SYA_SORC5</name>
<keyword id="KW-0030">Aminoacyl-tRNA synthetase</keyword>
<keyword id="KW-0067">ATP-binding</keyword>
<keyword id="KW-0963">Cytoplasm</keyword>
<keyword id="KW-0436">Ligase</keyword>
<keyword id="KW-0479">Metal-binding</keyword>
<keyword id="KW-0547">Nucleotide-binding</keyword>
<keyword id="KW-0648">Protein biosynthesis</keyword>
<keyword id="KW-1185">Reference proteome</keyword>
<keyword id="KW-0694">RNA-binding</keyword>
<keyword id="KW-0820">tRNA-binding</keyword>
<keyword id="KW-0862">Zinc</keyword>
<proteinExistence type="inferred from homology"/>
<gene>
    <name evidence="1" type="primary">alaS</name>
    <name type="ordered locus">sce5124</name>
</gene>
<evidence type="ECO:0000255" key="1">
    <source>
        <dbReference type="HAMAP-Rule" id="MF_00036"/>
    </source>
</evidence>
<reference key="1">
    <citation type="journal article" date="2007" name="Nat. Biotechnol.">
        <title>Complete genome sequence of the myxobacterium Sorangium cellulosum.</title>
        <authorList>
            <person name="Schneiker S."/>
            <person name="Perlova O."/>
            <person name="Kaiser O."/>
            <person name="Gerth K."/>
            <person name="Alici A."/>
            <person name="Altmeyer M.O."/>
            <person name="Bartels D."/>
            <person name="Bekel T."/>
            <person name="Beyer S."/>
            <person name="Bode E."/>
            <person name="Bode H.B."/>
            <person name="Bolten C.J."/>
            <person name="Choudhuri J.V."/>
            <person name="Doss S."/>
            <person name="Elnakady Y.A."/>
            <person name="Frank B."/>
            <person name="Gaigalat L."/>
            <person name="Goesmann A."/>
            <person name="Groeger C."/>
            <person name="Gross F."/>
            <person name="Jelsbak L."/>
            <person name="Jelsbak L."/>
            <person name="Kalinowski J."/>
            <person name="Kegler C."/>
            <person name="Knauber T."/>
            <person name="Konietzny S."/>
            <person name="Kopp M."/>
            <person name="Krause L."/>
            <person name="Krug D."/>
            <person name="Linke B."/>
            <person name="Mahmud T."/>
            <person name="Martinez-Arias R."/>
            <person name="McHardy A.C."/>
            <person name="Merai M."/>
            <person name="Meyer F."/>
            <person name="Mormann S."/>
            <person name="Munoz-Dorado J."/>
            <person name="Perez J."/>
            <person name="Pradella S."/>
            <person name="Rachid S."/>
            <person name="Raddatz G."/>
            <person name="Rosenau F."/>
            <person name="Rueckert C."/>
            <person name="Sasse F."/>
            <person name="Scharfe M."/>
            <person name="Schuster S.C."/>
            <person name="Suen G."/>
            <person name="Treuner-Lange A."/>
            <person name="Velicer G.J."/>
            <person name="Vorholter F.-J."/>
            <person name="Weissman K.J."/>
            <person name="Welch R.D."/>
            <person name="Wenzel S.C."/>
            <person name="Whitworth D.E."/>
            <person name="Wilhelm S."/>
            <person name="Wittmann C."/>
            <person name="Bloecker H."/>
            <person name="Puehler A."/>
            <person name="Mueller R."/>
        </authorList>
    </citation>
    <scope>NUCLEOTIDE SEQUENCE [LARGE SCALE GENOMIC DNA]</scope>
    <source>
        <strain>So ce56</strain>
    </source>
</reference>
<protein>
    <recommendedName>
        <fullName evidence="1">Alanine--tRNA ligase</fullName>
        <ecNumber evidence="1">6.1.1.7</ecNumber>
    </recommendedName>
    <alternativeName>
        <fullName evidence="1">Alanyl-tRNA synthetase</fullName>
        <shortName evidence="1">AlaRS</shortName>
    </alternativeName>
</protein>
<comment type="function">
    <text evidence="1">Catalyzes the attachment of alanine to tRNA(Ala) in a two-step reaction: alanine is first activated by ATP to form Ala-AMP and then transferred to the acceptor end of tRNA(Ala). Also edits incorrectly charged Ser-tRNA(Ala) and Gly-tRNA(Ala) via its editing domain.</text>
</comment>
<comment type="catalytic activity">
    <reaction evidence="1">
        <text>tRNA(Ala) + L-alanine + ATP = L-alanyl-tRNA(Ala) + AMP + diphosphate</text>
        <dbReference type="Rhea" id="RHEA:12540"/>
        <dbReference type="Rhea" id="RHEA-COMP:9657"/>
        <dbReference type="Rhea" id="RHEA-COMP:9923"/>
        <dbReference type="ChEBI" id="CHEBI:30616"/>
        <dbReference type="ChEBI" id="CHEBI:33019"/>
        <dbReference type="ChEBI" id="CHEBI:57972"/>
        <dbReference type="ChEBI" id="CHEBI:78442"/>
        <dbReference type="ChEBI" id="CHEBI:78497"/>
        <dbReference type="ChEBI" id="CHEBI:456215"/>
        <dbReference type="EC" id="6.1.1.7"/>
    </reaction>
</comment>
<comment type="cofactor">
    <cofactor evidence="1">
        <name>Zn(2+)</name>
        <dbReference type="ChEBI" id="CHEBI:29105"/>
    </cofactor>
    <text evidence="1">Binds 1 zinc ion per subunit.</text>
</comment>
<comment type="subcellular location">
    <subcellularLocation>
        <location evidence="1">Cytoplasm</location>
    </subcellularLocation>
</comment>
<comment type="domain">
    <text evidence="1">Consists of three domains; the N-terminal catalytic domain, the editing domain and the C-terminal C-Ala domain. The editing domain removes incorrectly charged amino acids, while the C-Ala domain, along with tRNA(Ala), serves as a bridge to cooperatively bring together the editing and aminoacylation centers thus stimulating deacylation of misacylated tRNAs.</text>
</comment>
<comment type="similarity">
    <text evidence="1">Belongs to the class-II aminoacyl-tRNA synthetase family.</text>
</comment>